<protein>
    <recommendedName>
        <fullName evidence="3">Small ribosomal subunit protein uS17c</fullName>
    </recommendedName>
    <alternativeName>
        <fullName>30S ribosomal protein S17, chloroplastic</fullName>
    </alternativeName>
    <alternativeName>
        <fullName>CS17</fullName>
    </alternativeName>
</protein>
<name>RR17_ORYSJ</name>
<organism>
    <name type="scientific">Oryza sativa subsp. japonica</name>
    <name type="common">Rice</name>
    <dbReference type="NCBI Taxonomy" id="39947"/>
    <lineage>
        <taxon>Eukaryota</taxon>
        <taxon>Viridiplantae</taxon>
        <taxon>Streptophyta</taxon>
        <taxon>Embryophyta</taxon>
        <taxon>Tracheophyta</taxon>
        <taxon>Spermatophyta</taxon>
        <taxon>Magnoliopsida</taxon>
        <taxon>Liliopsida</taxon>
        <taxon>Poales</taxon>
        <taxon>Poaceae</taxon>
        <taxon>BOP clade</taxon>
        <taxon>Oryzoideae</taxon>
        <taxon>Oryzeae</taxon>
        <taxon>Oryzinae</taxon>
        <taxon>Oryza</taxon>
        <taxon>Oryza sativa</taxon>
    </lineage>
</organism>
<sequence length="145" mass="15975">MLLTTPFVSSPVRVQGNGGSGASPWAGAATALRIQAAKQLTGRVVTTKADKTVGVEVVRLAPHPKYKRRERIKKKYQAHDPDNQFKVGDVVELRRSRPISKTKHFLAVPLPPRDTRRKSQLLPPLQSQSQSQDQDQPPTPPPSSD</sequence>
<accession>Q9ZST1</accession>
<accession>A0A0P0WGT3</accession>
<accession>Q0J8R3</accession>
<accession>Q7XKA4</accession>
<gene>
    <name type="primary">RPS17</name>
    <name type="ordered locus">Os04g0691500</name>
    <name evidence="4" type="ordered locus">Os04g0691600</name>
    <name evidence="3" type="ordered locus">LOC_Os04g59494</name>
    <name evidence="5" type="ORF">OsJ_16738</name>
    <name type="ORF">OSJNBb0020J19.5</name>
</gene>
<comment type="function">
    <text evidence="1">One of the primary rRNA binding proteins, it binds specifically to the 5'-end of 16S ribosomal RNA.</text>
</comment>
<comment type="subunit">
    <text>Part of the 30S ribosomal subunit.</text>
</comment>
<comment type="subcellular location">
    <subcellularLocation>
        <location evidence="3">Plastid</location>
        <location evidence="3">Chloroplast</location>
    </subcellularLocation>
</comment>
<comment type="similarity">
    <text evidence="3">Belongs to the universal ribosomal protein uS17 family.</text>
</comment>
<comment type="sequence caution" evidence="3">
    <conflict type="erroneous gene model prediction">
        <sequence resource="EMBL-CDS" id="CAE05776"/>
    </conflict>
</comment>
<reference key="1">
    <citation type="submission" date="1998-09" db="EMBL/GenBank/DDBJ databases">
        <title>Molecular cloning and characterization of three nuclear-encoded chloroplast precursor of ribosomal protein genes in rice.</title>
        <authorList>
            <person name="Lee J.-S."/>
            <person name="Eun M.-Y."/>
        </authorList>
    </citation>
    <scope>NUCLEOTIDE SEQUENCE [MRNA]</scope>
    <source>
        <strain>cv. Ilpoom</strain>
        <tissue>Leaf</tissue>
    </source>
</reference>
<reference key="2">
    <citation type="journal article" date="2002" name="Nature">
        <title>Sequence and analysis of rice chromosome 4.</title>
        <authorList>
            <person name="Feng Q."/>
            <person name="Zhang Y."/>
            <person name="Hao P."/>
            <person name="Wang S."/>
            <person name="Fu G."/>
            <person name="Huang Y."/>
            <person name="Li Y."/>
            <person name="Zhu J."/>
            <person name="Liu Y."/>
            <person name="Hu X."/>
            <person name="Jia P."/>
            <person name="Zhang Y."/>
            <person name="Zhao Q."/>
            <person name="Ying K."/>
            <person name="Yu S."/>
            <person name="Tang Y."/>
            <person name="Weng Q."/>
            <person name="Zhang L."/>
            <person name="Lu Y."/>
            <person name="Mu J."/>
            <person name="Lu Y."/>
            <person name="Zhang L.S."/>
            <person name="Yu Z."/>
            <person name="Fan D."/>
            <person name="Liu X."/>
            <person name="Lu T."/>
            <person name="Li C."/>
            <person name="Wu Y."/>
            <person name="Sun T."/>
            <person name="Lei H."/>
            <person name="Li T."/>
            <person name="Hu H."/>
            <person name="Guan J."/>
            <person name="Wu M."/>
            <person name="Zhang R."/>
            <person name="Zhou B."/>
            <person name="Chen Z."/>
            <person name="Chen L."/>
            <person name="Jin Z."/>
            <person name="Wang R."/>
            <person name="Yin H."/>
            <person name="Cai Z."/>
            <person name="Ren S."/>
            <person name="Lv G."/>
            <person name="Gu W."/>
            <person name="Zhu G."/>
            <person name="Tu Y."/>
            <person name="Jia J."/>
            <person name="Zhang Y."/>
            <person name="Chen J."/>
            <person name="Kang H."/>
            <person name="Chen X."/>
            <person name="Shao C."/>
            <person name="Sun Y."/>
            <person name="Hu Q."/>
            <person name="Zhang X."/>
            <person name="Zhang W."/>
            <person name="Wang L."/>
            <person name="Ding C."/>
            <person name="Sheng H."/>
            <person name="Gu J."/>
            <person name="Chen S."/>
            <person name="Ni L."/>
            <person name="Zhu F."/>
            <person name="Chen W."/>
            <person name="Lan L."/>
            <person name="Lai Y."/>
            <person name="Cheng Z."/>
            <person name="Gu M."/>
            <person name="Jiang J."/>
            <person name="Li J."/>
            <person name="Hong G."/>
            <person name="Xue Y."/>
            <person name="Han B."/>
        </authorList>
    </citation>
    <scope>NUCLEOTIDE SEQUENCE [LARGE SCALE GENOMIC DNA]</scope>
    <source>
        <strain>cv. Nipponbare</strain>
    </source>
</reference>
<reference key="3">
    <citation type="journal article" date="2005" name="Nature">
        <title>The map-based sequence of the rice genome.</title>
        <authorList>
            <consortium name="International rice genome sequencing project (IRGSP)"/>
        </authorList>
    </citation>
    <scope>NUCLEOTIDE SEQUENCE [LARGE SCALE GENOMIC DNA]</scope>
    <source>
        <strain>cv. Nipponbare</strain>
    </source>
</reference>
<reference key="4">
    <citation type="journal article" date="2008" name="Nucleic Acids Res.">
        <title>The rice annotation project database (RAP-DB): 2008 update.</title>
        <authorList>
            <consortium name="The rice annotation project (RAP)"/>
        </authorList>
    </citation>
    <scope>GENOME REANNOTATION</scope>
    <source>
        <strain>cv. Nipponbare</strain>
    </source>
</reference>
<reference key="5">
    <citation type="journal article" date="2013" name="Rice">
        <title>Improvement of the Oryza sativa Nipponbare reference genome using next generation sequence and optical map data.</title>
        <authorList>
            <person name="Kawahara Y."/>
            <person name="de la Bastide M."/>
            <person name="Hamilton J.P."/>
            <person name="Kanamori H."/>
            <person name="McCombie W.R."/>
            <person name="Ouyang S."/>
            <person name="Schwartz D.C."/>
            <person name="Tanaka T."/>
            <person name="Wu J."/>
            <person name="Zhou S."/>
            <person name="Childs K.L."/>
            <person name="Davidson R.M."/>
            <person name="Lin H."/>
            <person name="Quesada-Ocampo L."/>
            <person name="Vaillancourt B."/>
            <person name="Sakai H."/>
            <person name="Lee S.S."/>
            <person name="Kim J."/>
            <person name="Numa H."/>
            <person name="Itoh T."/>
            <person name="Buell C.R."/>
            <person name="Matsumoto T."/>
        </authorList>
    </citation>
    <scope>GENOME REANNOTATION</scope>
    <source>
        <strain>cv. Nipponbare</strain>
    </source>
</reference>
<reference key="6">
    <citation type="journal article" date="2005" name="PLoS Biol.">
        <title>The genomes of Oryza sativa: a history of duplications.</title>
        <authorList>
            <person name="Yu J."/>
            <person name="Wang J."/>
            <person name="Lin W."/>
            <person name="Li S."/>
            <person name="Li H."/>
            <person name="Zhou J."/>
            <person name="Ni P."/>
            <person name="Dong W."/>
            <person name="Hu S."/>
            <person name="Zeng C."/>
            <person name="Zhang J."/>
            <person name="Zhang Y."/>
            <person name="Li R."/>
            <person name="Xu Z."/>
            <person name="Li S."/>
            <person name="Li X."/>
            <person name="Zheng H."/>
            <person name="Cong L."/>
            <person name="Lin L."/>
            <person name="Yin J."/>
            <person name="Geng J."/>
            <person name="Li G."/>
            <person name="Shi J."/>
            <person name="Liu J."/>
            <person name="Lv H."/>
            <person name="Li J."/>
            <person name="Wang J."/>
            <person name="Deng Y."/>
            <person name="Ran L."/>
            <person name="Shi X."/>
            <person name="Wang X."/>
            <person name="Wu Q."/>
            <person name="Li C."/>
            <person name="Ren X."/>
            <person name="Wang J."/>
            <person name="Wang X."/>
            <person name="Li D."/>
            <person name="Liu D."/>
            <person name="Zhang X."/>
            <person name="Ji Z."/>
            <person name="Zhao W."/>
            <person name="Sun Y."/>
            <person name="Zhang Z."/>
            <person name="Bao J."/>
            <person name="Han Y."/>
            <person name="Dong L."/>
            <person name="Ji J."/>
            <person name="Chen P."/>
            <person name="Wu S."/>
            <person name="Liu J."/>
            <person name="Xiao Y."/>
            <person name="Bu D."/>
            <person name="Tan J."/>
            <person name="Yang L."/>
            <person name="Ye C."/>
            <person name="Zhang J."/>
            <person name="Xu J."/>
            <person name="Zhou Y."/>
            <person name="Yu Y."/>
            <person name="Zhang B."/>
            <person name="Zhuang S."/>
            <person name="Wei H."/>
            <person name="Liu B."/>
            <person name="Lei M."/>
            <person name="Yu H."/>
            <person name="Li Y."/>
            <person name="Xu H."/>
            <person name="Wei S."/>
            <person name="He X."/>
            <person name="Fang L."/>
            <person name="Zhang Z."/>
            <person name="Zhang Y."/>
            <person name="Huang X."/>
            <person name="Su Z."/>
            <person name="Tong W."/>
            <person name="Li J."/>
            <person name="Tong Z."/>
            <person name="Li S."/>
            <person name="Ye J."/>
            <person name="Wang L."/>
            <person name="Fang L."/>
            <person name="Lei T."/>
            <person name="Chen C.-S."/>
            <person name="Chen H.-C."/>
            <person name="Xu Z."/>
            <person name="Li H."/>
            <person name="Huang H."/>
            <person name="Zhang F."/>
            <person name="Xu H."/>
            <person name="Li N."/>
            <person name="Zhao C."/>
            <person name="Li S."/>
            <person name="Dong L."/>
            <person name="Huang Y."/>
            <person name="Li L."/>
            <person name="Xi Y."/>
            <person name="Qi Q."/>
            <person name="Li W."/>
            <person name="Zhang B."/>
            <person name="Hu W."/>
            <person name="Zhang Y."/>
            <person name="Tian X."/>
            <person name="Jiao Y."/>
            <person name="Liang X."/>
            <person name="Jin J."/>
            <person name="Gao L."/>
            <person name="Zheng W."/>
            <person name="Hao B."/>
            <person name="Liu S.-M."/>
            <person name="Wang W."/>
            <person name="Yuan L."/>
            <person name="Cao M."/>
            <person name="McDermott J."/>
            <person name="Samudrala R."/>
            <person name="Wang J."/>
            <person name="Wong G.K.-S."/>
            <person name="Yang H."/>
        </authorList>
    </citation>
    <scope>NUCLEOTIDE SEQUENCE [LARGE SCALE GENOMIC DNA]</scope>
    <source>
        <strain>cv. Nipponbare</strain>
    </source>
</reference>
<dbReference type="EMBL" id="AF095707">
    <property type="protein sequence ID" value="AAC64969.1"/>
    <property type="molecule type" value="mRNA"/>
</dbReference>
<dbReference type="EMBL" id="AL606656">
    <property type="protein sequence ID" value="CAE05776.2"/>
    <property type="status" value="ALT_SEQ"/>
    <property type="molecule type" value="Genomic_DNA"/>
</dbReference>
<dbReference type="EMBL" id="AP008210">
    <property type="protein sequence ID" value="BAF16274.1"/>
    <property type="molecule type" value="Genomic_DNA"/>
</dbReference>
<dbReference type="EMBL" id="AP014960">
    <property type="protein sequence ID" value="BAS91787.1"/>
    <property type="molecule type" value="Genomic_DNA"/>
</dbReference>
<dbReference type="EMBL" id="CM000141">
    <property type="protein sequence ID" value="EEE61965.1"/>
    <property type="molecule type" value="Genomic_DNA"/>
</dbReference>
<dbReference type="SMR" id="Q9ZST1"/>
<dbReference type="FunCoup" id="Q9ZST1">
    <property type="interactions" value="350"/>
</dbReference>
<dbReference type="STRING" id="39947.Q9ZST1"/>
<dbReference type="PaxDb" id="39947-Q9ZST1"/>
<dbReference type="EnsemblPlants" id="Os04t0691600-01">
    <property type="protein sequence ID" value="Os04t0691600-01"/>
    <property type="gene ID" value="Os04g0691600"/>
</dbReference>
<dbReference type="EnsemblPlants" id="Os04t0691600-02">
    <property type="protein sequence ID" value="Os04t0691600-02"/>
    <property type="gene ID" value="Os04g0691600"/>
</dbReference>
<dbReference type="Gramene" id="Os04t0691600-01">
    <property type="protein sequence ID" value="Os04t0691600-01"/>
    <property type="gene ID" value="Os04g0691600"/>
</dbReference>
<dbReference type="Gramene" id="Os04t0691600-02">
    <property type="protein sequence ID" value="Os04t0691600-02"/>
    <property type="gene ID" value="Os04g0691600"/>
</dbReference>
<dbReference type="KEGG" id="dosa:Os04g0691600"/>
<dbReference type="eggNOG" id="KOG1740">
    <property type="taxonomic scope" value="Eukaryota"/>
</dbReference>
<dbReference type="HOGENOM" id="CLU_119752_0_0_1"/>
<dbReference type="InParanoid" id="Q9ZST1"/>
<dbReference type="OMA" id="HANAPMS"/>
<dbReference type="Proteomes" id="UP000000763">
    <property type="component" value="Chromosome 4"/>
</dbReference>
<dbReference type="Proteomes" id="UP000007752">
    <property type="component" value="Chromosome 4"/>
</dbReference>
<dbReference type="Proteomes" id="UP000059680">
    <property type="component" value="Chromosome 4"/>
</dbReference>
<dbReference type="GO" id="GO:0009507">
    <property type="term" value="C:chloroplast"/>
    <property type="evidence" value="ECO:0007669"/>
    <property type="project" value="UniProtKB-SubCell"/>
</dbReference>
<dbReference type="GO" id="GO:1990904">
    <property type="term" value="C:ribonucleoprotein complex"/>
    <property type="evidence" value="ECO:0007669"/>
    <property type="project" value="UniProtKB-KW"/>
</dbReference>
<dbReference type="GO" id="GO:0005840">
    <property type="term" value="C:ribosome"/>
    <property type="evidence" value="ECO:0007669"/>
    <property type="project" value="UniProtKB-KW"/>
</dbReference>
<dbReference type="GO" id="GO:0019843">
    <property type="term" value="F:rRNA binding"/>
    <property type="evidence" value="ECO:0007669"/>
    <property type="project" value="UniProtKB-KW"/>
</dbReference>
<dbReference type="GO" id="GO:0003735">
    <property type="term" value="F:structural constituent of ribosome"/>
    <property type="evidence" value="ECO:0000318"/>
    <property type="project" value="GO_Central"/>
</dbReference>
<dbReference type="GO" id="GO:0006412">
    <property type="term" value="P:translation"/>
    <property type="evidence" value="ECO:0007669"/>
    <property type="project" value="InterPro"/>
</dbReference>
<dbReference type="CDD" id="cd00364">
    <property type="entry name" value="Ribosomal_uS17"/>
    <property type="match status" value="1"/>
</dbReference>
<dbReference type="FunFam" id="2.40.50.140:FF:000265">
    <property type="entry name" value="30S ribosomal protein S17, chloroplastic"/>
    <property type="match status" value="1"/>
</dbReference>
<dbReference type="Gene3D" id="2.40.50.140">
    <property type="entry name" value="Nucleic acid-binding proteins"/>
    <property type="match status" value="1"/>
</dbReference>
<dbReference type="HAMAP" id="MF_01345_B">
    <property type="entry name" value="Ribosomal_uS17_B"/>
    <property type="match status" value="1"/>
</dbReference>
<dbReference type="InterPro" id="IPR012340">
    <property type="entry name" value="NA-bd_OB-fold"/>
</dbReference>
<dbReference type="InterPro" id="IPR000266">
    <property type="entry name" value="Ribosomal_uS17"/>
</dbReference>
<dbReference type="InterPro" id="IPR019984">
    <property type="entry name" value="Ribosomal_uS17_bact/chlr"/>
</dbReference>
<dbReference type="NCBIfam" id="NF004123">
    <property type="entry name" value="PRK05610.1"/>
    <property type="match status" value="1"/>
</dbReference>
<dbReference type="PANTHER" id="PTHR10744">
    <property type="entry name" value="40S RIBOSOMAL PROTEIN S11 FAMILY MEMBER"/>
    <property type="match status" value="1"/>
</dbReference>
<dbReference type="PANTHER" id="PTHR10744:SF7">
    <property type="entry name" value="SMALL RIBOSOMAL SUBUNIT PROTEIN US17C"/>
    <property type="match status" value="1"/>
</dbReference>
<dbReference type="Pfam" id="PF00366">
    <property type="entry name" value="Ribosomal_S17"/>
    <property type="match status" value="1"/>
</dbReference>
<dbReference type="PRINTS" id="PR00973">
    <property type="entry name" value="RIBOSOMALS17"/>
</dbReference>
<dbReference type="SUPFAM" id="SSF50249">
    <property type="entry name" value="Nucleic acid-binding proteins"/>
    <property type="match status" value="1"/>
</dbReference>
<proteinExistence type="evidence at transcript level"/>
<evidence type="ECO:0000250" key="1"/>
<evidence type="ECO:0000256" key="2">
    <source>
        <dbReference type="SAM" id="MobiDB-lite"/>
    </source>
</evidence>
<evidence type="ECO:0000305" key="3"/>
<evidence type="ECO:0000312" key="4">
    <source>
        <dbReference type="EMBL" id="BAF16274.1"/>
    </source>
</evidence>
<evidence type="ECO:0000312" key="5">
    <source>
        <dbReference type="EMBL" id="EEE61965.1"/>
    </source>
</evidence>
<feature type="transit peptide" description="Chloroplast">
    <location>
        <begin position="1"/>
        <end position="36"/>
    </location>
</feature>
<feature type="chain" id="PRO_0000030621" description="Small ribosomal subunit protein uS17c">
    <location>
        <begin position="37"/>
        <end position="145"/>
    </location>
</feature>
<feature type="region of interest" description="Disordered" evidence="2">
    <location>
        <begin position="101"/>
        <end position="145"/>
    </location>
</feature>
<feature type="compositionally biased region" description="Low complexity" evidence="2">
    <location>
        <begin position="120"/>
        <end position="136"/>
    </location>
</feature>
<keyword id="KW-0150">Chloroplast</keyword>
<keyword id="KW-0934">Plastid</keyword>
<keyword id="KW-1185">Reference proteome</keyword>
<keyword id="KW-0687">Ribonucleoprotein</keyword>
<keyword id="KW-0689">Ribosomal protein</keyword>
<keyword id="KW-0694">RNA-binding</keyword>
<keyword id="KW-0699">rRNA-binding</keyword>
<keyword id="KW-0809">Transit peptide</keyword>